<evidence type="ECO:0000250" key="1">
    <source>
        <dbReference type="UniProtKB" id="P22253"/>
    </source>
</evidence>
<evidence type="ECO:0000250" key="2">
    <source>
        <dbReference type="UniProtKB" id="Q6XQN6"/>
    </source>
</evidence>
<evidence type="ECO:0000250" key="3">
    <source>
        <dbReference type="UniProtKB" id="Q9HJ28"/>
    </source>
</evidence>
<evidence type="ECO:0000269" key="4">
    <source>
    </source>
</evidence>
<evidence type="ECO:0000305" key="5"/>
<accession>Q8CC86</accession>
<accession>Q8C7W2</accession>
<keyword id="KW-0963">Cytoplasm</keyword>
<keyword id="KW-0436">Ligase</keyword>
<keyword id="KW-0460">Magnesium</keyword>
<keyword id="KW-0464">Manganese</keyword>
<keyword id="KW-0479">Metal-binding</keyword>
<keyword id="KW-0597">Phosphoprotein</keyword>
<keyword id="KW-0662">Pyridine nucleotide biosynthesis</keyword>
<keyword id="KW-1185">Reference proteome</keyword>
<keyword id="KW-0808">Transferase</keyword>
<comment type="function">
    <text evidence="2">Catalyzes the first step in the biosynthesis of NAD from nicotinic acid, the ATP-dependent synthesis of beta-nicotinate D-ribonucleotide from nicotinate and 5-phospho-D-ribose 1-phosphate. Helps prevent cellular oxidative stress via its role in NAD biosynthesis.</text>
</comment>
<comment type="catalytic activity">
    <reaction evidence="2">
        <text>nicotinate + 5-phospho-alpha-D-ribose 1-diphosphate + ATP + H2O = nicotinate beta-D-ribonucleotide + ADP + phosphate + diphosphate</text>
        <dbReference type="Rhea" id="RHEA:36163"/>
        <dbReference type="ChEBI" id="CHEBI:15377"/>
        <dbReference type="ChEBI" id="CHEBI:30616"/>
        <dbReference type="ChEBI" id="CHEBI:32544"/>
        <dbReference type="ChEBI" id="CHEBI:33019"/>
        <dbReference type="ChEBI" id="CHEBI:43474"/>
        <dbReference type="ChEBI" id="CHEBI:57502"/>
        <dbReference type="ChEBI" id="CHEBI:58017"/>
        <dbReference type="ChEBI" id="CHEBI:456216"/>
        <dbReference type="EC" id="6.3.4.21"/>
    </reaction>
</comment>
<comment type="cofactor">
    <cofactor evidence="2">
        <name>Mg(2+)</name>
        <dbReference type="ChEBI" id="CHEBI:18420"/>
    </cofactor>
    <cofactor evidence="2">
        <name>Mn(2+)</name>
        <dbReference type="ChEBI" id="CHEBI:29035"/>
    </cofactor>
    <text evidence="2">Activity is highest with Mn(2+).</text>
</comment>
<comment type="pathway">
    <text evidence="2">Cofactor biosynthesis; NAD(+) biosynthesis; nicotinate D-ribonucleotide from nicotinate: step 1/1.</text>
</comment>
<comment type="subunit">
    <text evidence="2">Homodimer.</text>
</comment>
<comment type="subcellular location">
    <subcellularLocation>
        <location evidence="2">Cytoplasm</location>
        <location evidence="2">Cytosol</location>
    </subcellularLocation>
</comment>
<comment type="tissue specificity">
    <text evidence="4">Abundantly expressed in the small intestine, liver and kidney.</text>
</comment>
<comment type="PTM">
    <text evidence="1">Transiently phosphorylated on a His residue during the reaction cycle. Phosphorylation strongly increases the affinity for substrates and increases the rate of nicotinate D-ribonucleotide production. Dephosphorylation regenerates the low-affinity form of the enzyme, leading to product release.</text>
</comment>
<comment type="similarity">
    <text evidence="5">Belongs to the NAPRTase family.</text>
</comment>
<comment type="sequence caution" evidence="5">
    <conflict type="erroneous initiation">
        <sequence resource="EMBL-CDS" id="BAC33575"/>
    </conflict>
    <text>Truncated N-terminus.</text>
</comment>
<comment type="sequence caution" evidence="5">
    <conflict type="erroneous termination">
        <sequence resource="EMBL-CDS" id="BAC33575"/>
    </conflict>
    <text>Truncated C-terminus.</text>
</comment>
<name>PNCB_MOUSE</name>
<proteinExistence type="evidence at protein level"/>
<protein>
    <recommendedName>
        <fullName>Nicotinate phosphoribosyltransferase</fullName>
        <shortName>NAPRTase</shortName>
        <ecNumber evidence="2">6.3.4.21</ecNumber>
    </recommendedName>
    <alternativeName>
        <fullName>Nicotinate phosphoribosyltransferase domain-containing protein 1</fullName>
    </alternativeName>
</protein>
<sequence length="538" mass="58265">MEMELDSEGRMVVRPLLTDLYQATMALGYWRAGRACEAAEFELFFRHCPFGGSFALSAGLQDCMRFLRAFRLRDADVQFLASVLPPDTDPAFFEHLRALDCSGVTVRALPEGSLAFPGVPLLQVSGPLLLVQLLETPLLCLVSYASLVATNAARLRLIAGPDKKLLEMGLRRAQGPDGGFTASIYSYLGGFDSSSNTLAGQLRGVPVAGTLAHSFVTSFSGSEVPPDPMLAPASSEGPTVDLPARVNLWLKRVCLYLGLEEQEPHPGERAAFVAYALAFPRAFQGLLDSYSVRRSGLPNFLAVALALGELGYRAVGVRLDSGDLLQQAKEIRGIFRTAGAQFQMPWLESVPIAVSNNIDESELMRLAQKGSEVNVIGIGTSVVTCPKQPSMGCVYKLVSVGGQPRIKLTEDPEKQTLPGSKAAFRFLGPDGSLLLDLLQLAEEPPPKAGQELRVWPRGTQEPCTVKPAQVEPLLRLYLQQGQLCEPLPSLDESRRFAQQSLSLLRPAHKQLQSPAVYPVALSEKLRALVDSLSARGPL</sequence>
<dbReference type="EC" id="6.3.4.21" evidence="2"/>
<dbReference type="EMBL" id="AY214331">
    <property type="protein sequence ID" value="AAP69609.1"/>
    <property type="molecule type" value="mRNA"/>
</dbReference>
<dbReference type="EMBL" id="AK033661">
    <property type="protein sequence ID" value="BAC28414.1"/>
    <property type="molecule type" value="mRNA"/>
</dbReference>
<dbReference type="EMBL" id="AK049157">
    <property type="protein sequence ID" value="BAC33575.1"/>
    <property type="status" value="ALT_SEQ"/>
    <property type="molecule type" value="mRNA"/>
</dbReference>
<dbReference type="EMBL" id="AK159127">
    <property type="protein sequence ID" value="BAE34841.1"/>
    <property type="molecule type" value="mRNA"/>
</dbReference>
<dbReference type="EMBL" id="AK170518">
    <property type="protein sequence ID" value="BAE41854.1"/>
    <property type="molecule type" value="mRNA"/>
</dbReference>
<dbReference type="EMBL" id="BC058800">
    <property type="protein sequence ID" value="AAH58800.1"/>
    <property type="molecule type" value="mRNA"/>
</dbReference>
<dbReference type="CCDS" id="CCDS27552.1"/>
<dbReference type="RefSeq" id="NP_766195.2">
    <property type="nucleotide sequence ID" value="NM_172607.3"/>
</dbReference>
<dbReference type="SMR" id="Q8CC86"/>
<dbReference type="BioGRID" id="230165">
    <property type="interactions" value="3"/>
</dbReference>
<dbReference type="FunCoup" id="Q8CC86">
    <property type="interactions" value="678"/>
</dbReference>
<dbReference type="STRING" id="10090.ENSMUSP00000023237"/>
<dbReference type="GlyGen" id="Q8CC86">
    <property type="glycosylation" value="1 site"/>
</dbReference>
<dbReference type="iPTMnet" id="Q8CC86"/>
<dbReference type="PhosphoSitePlus" id="Q8CC86"/>
<dbReference type="SwissPalm" id="Q8CC86"/>
<dbReference type="jPOST" id="Q8CC86"/>
<dbReference type="PaxDb" id="10090-ENSMUSP00000023237"/>
<dbReference type="PeptideAtlas" id="Q8CC86"/>
<dbReference type="ProteomicsDB" id="289703"/>
<dbReference type="Pumba" id="Q8CC86"/>
<dbReference type="Antibodypedia" id="14617">
    <property type="antibodies" value="191 antibodies from 28 providers"/>
</dbReference>
<dbReference type="DNASU" id="223646"/>
<dbReference type="Ensembl" id="ENSMUST00000023237.8">
    <property type="protein sequence ID" value="ENSMUSP00000023237.7"/>
    <property type="gene ID" value="ENSMUSG00000022574.8"/>
</dbReference>
<dbReference type="GeneID" id="223646"/>
<dbReference type="KEGG" id="mmu:223646"/>
<dbReference type="UCSC" id="uc007whi.1">
    <property type="organism name" value="mouse"/>
</dbReference>
<dbReference type="AGR" id="MGI:2442664"/>
<dbReference type="CTD" id="93100"/>
<dbReference type="MGI" id="MGI:2442664">
    <property type="gene designation" value="Naprt"/>
</dbReference>
<dbReference type="VEuPathDB" id="HostDB:ENSMUSG00000022574"/>
<dbReference type="eggNOG" id="KOG2511">
    <property type="taxonomic scope" value="Eukaryota"/>
</dbReference>
<dbReference type="GeneTree" id="ENSGT00940000153456"/>
<dbReference type="HOGENOM" id="CLU_025154_1_0_1"/>
<dbReference type="InParanoid" id="Q8CC86"/>
<dbReference type="OMA" id="VYFPGSP"/>
<dbReference type="OrthoDB" id="193380at2759"/>
<dbReference type="PhylomeDB" id="Q8CC86"/>
<dbReference type="TreeFam" id="TF314732"/>
<dbReference type="BRENDA" id="6.3.4.21">
    <property type="organism ID" value="3474"/>
</dbReference>
<dbReference type="Reactome" id="R-MMU-197264">
    <property type="pathway name" value="Nicotinamide salvaging"/>
</dbReference>
<dbReference type="Reactome" id="R-MMU-6798695">
    <property type="pathway name" value="Neutrophil degranulation"/>
</dbReference>
<dbReference type="UniPathway" id="UPA00253">
    <property type="reaction ID" value="UER00457"/>
</dbReference>
<dbReference type="BioGRID-ORCS" id="223646">
    <property type="hits" value="4 hits in 76 CRISPR screens"/>
</dbReference>
<dbReference type="PRO" id="PR:Q8CC86"/>
<dbReference type="Proteomes" id="UP000000589">
    <property type="component" value="Chromosome 15"/>
</dbReference>
<dbReference type="RNAct" id="Q8CC86">
    <property type="molecule type" value="protein"/>
</dbReference>
<dbReference type="Bgee" id="ENSMUSG00000022574">
    <property type="expression patterns" value="Expressed in duodenum and 133 other cell types or tissues"/>
</dbReference>
<dbReference type="ExpressionAtlas" id="Q8CC86">
    <property type="expression patterns" value="baseline and differential"/>
</dbReference>
<dbReference type="GO" id="GO:0005829">
    <property type="term" value="C:cytosol"/>
    <property type="evidence" value="ECO:0000250"/>
    <property type="project" value="UniProtKB"/>
</dbReference>
<dbReference type="GO" id="GO:0046872">
    <property type="term" value="F:metal ion binding"/>
    <property type="evidence" value="ECO:0007669"/>
    <property type="project" value="UniProtKB-KW"/>
</dbReference>
<dbReference type="GO" id="GO:0004516">
    <property type="term" value="F:nicotinate phosphoribosyltransferase activity"/>
    <property type="evidence" value="ECO:0000250"/>
    <property type="project" value="UniProtKB"/>
</dbReference>
<dbReference type="GO" id="GO:0016740">
    <property type="term" value="F:transferase activity"/>
    <property type="evidence" value="ECO:0007669"/>
    <property type="project" value="UniProtKB-KW"/>
</dbReference>
<dbReference type="GO" id="GO:0034355">
    <property type="term" value="P:NAD biosynthetic process via the salvage pathway"/>
    <property type="evidence" value="ECO:0007669"/>
    <property type="project" value="Ensembl"/>
</dbReference>
<dbReference type="GO" id="GO:0006979">
    <property type="term" value="P:response to oxidative stress"/>
    <property type="evidence" value="ECO:0000250"/>
    <property type="project" value="UniProtKB"/>
</dbReference>
<dbReference type="CDD" id="cd01570">
    <property type="entry name" value="NAPRTase_A"/>
    <property type="match status" value="1"/>
</dbReference>
<dbReference type="FunFam" id="3.20.140.10:FF:000005">
    <property type="entry name" value="Nicotinate phosphoribosyltransferase"/>
    <property type="match status" value="1"/>
</dbReference>
<dbReference type="FunFam" id="3.20.140.10:FF:000007">
    <property type="entry name" value="Nicotinate phosphoribosyltransferase"/>
    <property type="match status" value="1"/>
</dbReference>
<dbReference type="FunFam" id="3.20.20.70:FF:000126">
    <property type="entry name" value="Nicotinate phosphoribosyltransferase"/>
    <property type="match status" value="1"/>
</dbReference>
<dbReference type="FunFam" id="3.20.20.70:FF:000155">
    <property type="entry name" value="Nicotinate phosphoribosyltransferase"/>
    <property type="match status" value="1"/>
</dbReference>
<dbReference type="Gene3D" id="3.20.20.70">
    <property type="entry name" value="Aldolase class I"/>
    <property type="match status" value="1"/>
</dbReference>
<dbReference type="Gene3D" id="3.20.140.10">
    <property type="entry name" value="nicotinate phosphoribosyltransferase"/>
    <property type="match status" value="2"/>
</dbReference>
<dbReference type="InterPro" id="IPR013785">
    <property type="entry name" value="Aldolase_TIM"/>
</dbReference>
<dbReference type="InterPro" id="IPR041619">
    <property type="entry name" value="NAPRTase_C"/>
</dbReference>
<dbReference type="InterPro" id="IPR040727">
    <property type="entry name" value="NAPRTase_N"/>
</dbReference>
<dbReference type="InterPro" id="IPR007229">
    <property type="entry name" value="Nic_PRibTrfase-Fam"/>
</dbReference>
<dbReference type="InterPro" id="IPR006405">
    <property type="entry name" value="Nic_PRibTrfase_pncB"/>
</dbReference>
<dbReference type="InterPro" id="IPR036068">
    <property type="entry name" value="Nicotinate_pribotase-like_C"/>
</dbReference>
<dbReference type="NCBIfam" id="TIGR01513">
    <property type="entry name" value="NAPRTase_put"/>
    <property type="match status" value="1"/>
</dbReference>
<dbReference type="PANTHER" id="PTHR11098">
    <property type="entry name" value="NICOTINATE PHOSPHORIBOSYLTRANSFERASE"/>
    <property type="match status" value="1"/>
</dbReference>
<dbReference type="PANTHER" id="PTHR11098:SF1">
    <property type="entry name" value="NICOTINATE PHOSPHORIBOSYLTRANSFERASE"/>
    <property type="match status" value="1"/>
</dbReference>
<dbReference type="Pfam" id="PF17956">
    <property type="entry name" value="NAPRTase_C"/>
    <property type="match status" value="1"/>
</dbReference>
<dbReference type="Pfam" id="PF17767">
    <property type="entry name" value="NAPRTase_N"/>
    <property type="match status" value="1"/>
</dbReference>
<dbReference type="PIRSF" id="PIRSF000484">
    <property type="entry name" value="NAPRT"/>
    <property type="match status" value="1"/>
</dbReference>
<dbReference type="SUPFAM" id="SSF51690">
    <property type="entry name" value="Nicotinate/Quinolinate PRTase C-terminal domain-like"/>
    <property type="match status" value="1"/>
</dbReference>
<dbReference type="SUPFAM" id="SSF54675">
    <property type="entry name" value="Nicotinate/Quinolinate PRTase N-terminal domain-like"/>
    <property type="match status" value="1"/>
</dbReference>
<reference key="1">
    <citation type="submission" date="2003-01" db="EMBL/GenBank/DDBJ databases">
        <title>Sequence analysis and molecular evolution of the eukaryotic nicotinate phosphoribosyltransferase family.</title>
        <authorList>
            <person name="Huang C.-H."/>
            <person name="Peng J."/>
            <person name="Chen Y."/>
        </authorList>
    </citation>
    <scope>NUCLEOTIDE SEQUENCE [MRNA]</scope>
</reference>
<reference key="2">
    <citation type="journal article" date="2005" name="Science">
        <title>The transcriptional landscape of the mammalian genome.</title>
        <authorList>
            <person name="Carninci P."/>
            <person name="Kasukawa T."/>
            <person name="Katayama S."/>
            <person name="Gough J."/>
            <person name="Frith M.C."/>
            <person name="Maeda N."/>
            <person name="Oyama R."/>
            <person name="Ravasi T."/>
            <person name="Lenhard B."/>
            <person name="Wells C."/>
            <person name="Kodzius R."/>
            <person name="Shimokawa K."/>
            <person name="Bajic V.B."/>
            <person name="Brenner S.E."/>
            <person name="Batalov S."/>
            <person name="Forrest A.R."/>
            <person name="Zavolan M."/>
            <person name="Davis M.J."/>
            <person name="Wilming L.G."/>
            <person name="Aidinis V."/>
            <person name="Allen J.E."/>
            <person name="Ambesi-Impiombato A."/>
            <person name="Apweiler R."/>
            <person name="Aturaliya R.N."/>
            <person name="Bailey T.L."/>
            <person name="Bansal M."/>
            <person name="Baxter L."/>
            <person name="Beisel K.W."/>
            <person name="Bersano T."/>
            <person name="Bono H."/>
            <person name="Chalk A.M."/>
            <person name="Chiu K.P."/>
            <person name="Choudhary V."/>
            <person name="Christoffels A."/>
            <person name="Clutterbuck D.R."/>
            <person name="Crowe M.L."/>
            <person name="Dalla E."/>
            <person name="Dalrymple B.P."/>
            <person name="de Bono B."/>
            <person name="Della Gatta G."/>
            <person name="di Bernardo D."/>
            <person name="Down T."/>
            <person name="Engstrom P."/>
            <person name="Fagiolini M."/>
            <person name="Faulkner G."/>
            <person name="Fletcher C.F."/>
            <person name="Fukushima T."/>
            <person name="Furuno M."/>
            <person name="Futaki S."/>
            <person name="Gariboldi M."/>
            <person name="Georgii-Hemming P."/>
            <person name="Gingeras T.R."/>
            <person name="Gojobori T."/>
            <person name="Green R.E."/>
            <person name="Gustincich S."/>
            <person name="Harbers M."/>
            <person name="Hayashi Y."/>
            <person name="Hensch T.K."/>
            <person name="Hirokawa N."/>
            <person name="Hill D."/>
            <person name="Huminiecki L."/>
            <person name="Iacono M."/>
            <person name="Ikeo K."/>
            <person name="Iwama A."/>
            <person name="Ishikawa T."/>
            <person name="Jakt M."/>
            <person name="Kanapin A."/>
            <person name="Katoh M."/>
            <person name="Kawasawa Y."/>
            <person name="Kelso J."/>
            <person name="Kitamura H."/>
            <person name="Kitano H."/>
            <person name="Kollias G."/>
            <person name="Krishnan S.P."/>
            <person name="Kruger A."/>
            <person name="Kummerfeld S.K."/>
            <person name="Kurochkin I.V."/>
            <person name="Lareau L.F."/>
            <person name="Lazarevic D."/>
            <person name="Lipovich L."/>
            <person name="Liu J."/>
            <person name="Liuni S."/>
            <person name="McWilliam S."/>
            <person name="Madan Babu M."/>
            <person name="Madera M."/>
            <person name="Marchionni L."/>
            <person name="Matsuda H."/>
            <person name="Matsuzawa S."/>
            <person name="Miki H."/>
            <person name="Mignone F."/>
            <person name="Miyake S."/>
            <person name="Morris K."/>
            <person name="Mottagui-Tabar S."/>
            <person name="Mulder N."/>
            <person name="Nakano N."/>
            <person name="Nakauchi H."/>
            <person name="Ng P."/>
            <person name="Nilsson R."/>
            <person name="Nishiguchi S."/>
            <person name="Nishikawa S."/>
            <person name="Nori F."/>
            <person name="Ohara O."/>
            <person name="Okazaki Y."/>
            <person name="Orlando V."/>
            <person name="Pang K.C."/>
            <person name="Pavan W.J."/>
            <person name="Pavesi G."/>
            <person name="Pesole G."/>
            <person name="Petrovsky N."/>
            <person name="Piazza S."/>
            <person name="Reed J."/>
            <person name="Reid J.F."/>
            <person name="Ring B.Z."/>
            <person name="Ringwald M."/>
            <person name="Rost B."/>
            <person name="Ruan Y."/>
            <person name="Salzberg S.L."/>
            <person name="Sandelin A."/>
            <person name="Schneider C."/>
            <person name="Schoenbach C."/>
            <person name="Sekiguchi K."/>
            <person name="Semple C.A."/>
            <person name="Seno S."/>
            <person name="Sessa L."/>
            <person name="Sheng Y."/>
            <person name="Shibata Y."/>
            <person name="Shimada H."/>
            <person name="Shimada K."/>
            <person name="Silva D."/>
            <person name="Sinclair B."/>
            <person name="Sperling S."/>
            <person name="Stupka E."/>
            <person name="Sugiura K."/>
            <person name="Sultana R."/>
            <person name="Takenaka Y."/>
            <person name="Taki K."/>
            <person name="Tammoja K."/>
            <person name="Tan S.L."/>
            <person name="Tang S."/>
            <person name="Taylor M.S."/>
            <person name="Tegner J."/>
            <person name="Teichmann S.A."/>
            <person name="Ueda H.R."/>
            <person name="van Nimwegen E."/>
            <person name="Verardo R."/>
            <person name="Wei C.L."/>
            <person name="Yagi K."/>
            <person name="Yamanishi H."/>
            <person name="Zabarovsky E."/>
            <person name="Zhu S."/>
            <person name="Zimmer A."/>
            <person name="Hide W."/>
            <person name="Bult C."/>
            <person name="Grimmond S.M."/>
            <person name="Teasdale R.D."/>
            <person name="Liu E.T."/>
            <person name="Brusic V."/>
            <person name="Quackenbush J."/>
            <person name="Wahlestedt C."/>
            <person name="Mattick J.S."/>
            <person name="Hume D.A."/>
            <person name="Kai C."/>
            <person name="Sasaki D."/>
            <person name="Tomaru Y."/>
            <person name="Fukuda S."/>
            <person name="Kanamori-Katayama M."/>
            <person name="Suzuki M."/>
            <person name="Aoki J."/>
            <person name="Arakawa T."/>
            <person name="Iida J."/>
            <person name="Imamura K."/>
            <person name="Itoh M."/>
            <person name="Kato T."/>
            <person name="Kawaji H."/>
            <person name="Kawagashira N."/>
            <person name="Kawashima T."/>
            <person name="Kojima M."/>
            <person name="Kondo S."/>
            <person name="Konno H."/>
            <person name="Nakano K."/>
            <person name="Ninomiya N."/>
            <person name="Nishio T."/>
            <person name="Okada M."/>
            <person name="Plessy C."/>
            <person name="Shibata K."/>
            <person name="Shiraki T."/>
            <person name="Suzuki S."/>
            <person name="Tagami M."/>
            <person name="Waki K."/>
            <person name="Watahiki A."/>
            <person name="Okamura-Oho Y."/>
            <person name="Suzuki H."/>
            <person name="Kawai J."/>
            <person name="Hayashizaki Y."/>
        </authorList>
    </citation>
    <scope>NUCLEOTIDE SEQUENCE [LARGE SCALE MRNA]</scope>
    <source>
        <strain>C57BL/6J</strain>
        <strain>NOD</strain>
        <tissue>Cecum</tissue>
    </source>
</reference>
<reference key="3">
    <citation type="journal article" date="2004" name="Genome Res.">
        <title>The status, quality, and expansion of the NIH full-length cDNA project: the Mammalian Gene Collection (MGC).</title>
        <authorList>
            <consortium name="The MGC Project Team"/>
        </authorList>
    </citation>
    <scope>NUCLEOTIDE SEQUENCE [LARGE SCALE MRNA]</scope>
    <source>
        <strain>FVB/N</strain>
        <tissue>Colon</tissue>
    </source>
</reference>
<reference key="4">
    <citation type="journal article" date="2007" name="J. Biol. Chem.">
        <title>Elevation of cellular NAD levels by nicotinic acid and involvement of nicotinic acid phosphoribosyltransferase in human cells.</title>
        <authorList>
            <person name="Hara N."/>
            <person name="Yamada K."/>
            <person name="Shibata T."/>
            <person name="Osago H."/>
            <person name="Hashimoto T."/>
            <person name="Tsuchiya M."/>
        </authorList>
    </citation>
    <scope>TISSUE SPECIFICITY</scope>
</reference>
<reference key="5">
    <citation type="journal article" date="2010" name="Cell">
        <title>A tissue-specific atlas of mouse protein phosphorylation and expression.</title>
        <authorList>
            <person name="Huttlin E.L."/>
            <person name="Jedrychowski M.P."/>
            <person name="Elias J.E."/>
            <person name="Goswami T."/>
            <person name="Rad R."/>
            <person name="Beausoleil S.A."/>
            <person name="Villen J."/>
            <person name="Haas W."/>
            <person name="Sowa M.E."/>
            <person name="Gygi S.P."/>
        </authorList>
    </citation>
    <scope>IDENTIFICATION BY MASS SPECTROMETRY [LARGE SCALE ANALYSIS]</scope>
    <source>
        <tissue>Brown adipose tissue</tissue>
        <tissue>Heart</tissue>
        <tissue>Kidney</tissue>
        <tissue>Liver</tissue>
        <tissue>Lung</tissue>
        <tissue>Pancreas</tissue>
        <tissue>Spleen</tissue>
    </source>
</reference>
<organism>
    <name type="scientific">Mus musculus</name>
    <name type="common">Mouse</name>
    <dbReference type="NCBI Taxonomy" id="10090"/>
    <lineage>
        <taxon>Eukaryota</taxon>
        <taxon>Metazoa</taxon>
        <taxon>Chordata</taxon>
        <taxon>Craniata</taxon>
        <taxon>Vertebrata</taxon>
        <taxon>Euteleostomi</taxon>
        <taxon>Mammalia</taxon>
        <taxon>Eutheria</taxon>
        <taxon>Euarchontoglires</taxon>
        <taxon>Glires</taxon>
        <taxon>Rodentia</taxon>
        <taxon>Myomorpha</taxon>
        <taxon>Muroidea</taxon>
        <taxon>Muridae</taxon>
        <taxon>Murinae</taxon>
        <taxon>Mus</taxon>
        <taxon>Mus</taxon>
    </lineage>
</organism>
<feature type="chain" id="PRO_0000315682" description="Nicotinate phosphoribosyltransferase">
    <location>
        <begin position="1"/>
        <end position="538"/>
    </location>
</feature>
<feature type="binding site" evidence="3">
    <location>
        <position position="21"/>
    </location>
    <ligand>
        <name>nicotinate</name>
        <dbReference type="ChEBI" id="CHEBI:32544"/>
    </ligand>
</feature>
<feature type="binding site" evidence="3">
    <location>
        <position position="210"/>
    </location>
    <ligand>
        <name>nicotinate</name>
        <dbReference type="ChEBI" id="CHEBI:32544"/>
    </ligand>
</feature>
<feature type="binding site" evidence="3">
    <location>
        <position position="318"/>
    </location>
    <ligand>
        <name>nicotinate</name>
        <dbReference type="ChEBI" id="CHEBI:32544"/>
    </ligand>
</feature>
<feature type="binding site" evidence="3">
    <location>
        <position position="380"/>
    </location>
    <ligand>
        <name>5-phospho-alpha-D-ribose 1-diphosphate</name>
        <dbReference type="ChEBI" id="CHEBI:58017"/>
    </ligand>
</feature>
<feature type="modified residue" description="Phosphohistidine" evidence="1">
    <location>
        <position position="213"/>
    </location>
</feature>
<feature type="sequence conflict" description="In Ref. 2; BAC33575." evidence="5" ref="2">
    <original>P</original>
    <variation>T</variation>
    <location>
        <position position="518"/>
    </location>
</feature>
<gene>
    <name type="primary">Naprt</name>
    <name type="synonym">Naprt1</name>
</gene>